<gene>
    <name evidence="1" type="primary">thrL</name>
    <name type="ordered locus">UTI89_C0001</name>
</gene>
<keyword id="KW-0028">Amino-acid biosynthesis</keyword>
<keyword id="KW-0428">Leader peptide</keyword>
<keyword id="KW-0791">Threonine biosynthesis</keyword>
<reference key="1">
    <citation type="journal article" date="2006" name="Proc. Natl. Acad. Sci. U.S.A.">
        <title>Identification of genes subject to positive selection in uropathogenic strains of Escherichia coli: a comparative genomics approach.</title>
        <authorList>
            <person name="Chen S.L."/>
            <person name="Hung C.-S."/>
            <person name="Xu J."/>
            <person name="Reigstad C.S."/>
            <person name="Magrini V."/>
            <person name="Sabo A."/>
            <person name="Blasiar D."/>
            <person name="Bieri T."/>
            <person name="Meyer R.R."/>
            <person name="Ozersky P."/>
            <person name="Armstrong J.R."/>
            <person name="Fulton R.S."/>
            <person name="Latreille J.P."/>
            <person name="Spieth J."/>
            <person name="Hooton T.M."/>
            <person name="Mardis E.R."/>
            <person name="Hultgren S.J."/>
            <person name="Gordon J.I."/>
        </authorList>
    </citation>
    <scope>NUCLEOTIDE SEQUENCE [LARGE SCALE GENOMIC DNA]</scope>
    <source>
        <strain>UTI89 / UPEC</strain>
    </source>
</reference>
<accession>Q1RGK3</accession>
<sequence length="21" mass="2138">MKRISTTITTTITITTGNGAG</sequence>
<comment type="function">
    <text evidence="1">This protein is involved in control of the biosynthesis of threonine.</text>
</comment>
<comment type="similarity">
    <text evidence="1">Belongs to the thr operon leader peptide family.</text>
</comment>
<protein>
    <recommendedName>
        <fullName evidence="1">thr operon leader peptide</fullName>
    </recommendedName>
    <alternativeName>
        <fullName evidence="1">thr operon attenuator</fullName>
    </alternativeName>
</protein>
<dbReference type="EMBL" id="CP000243">
    <property type="protein sequence ID" value="ABE05511.1"/>
    <property type="molecule type" value="Genomic_DNA"/>
</dbReference>
<dbReference type="RefSeq" id="WP_001386572.1">
    <property type="nucleotide sequence ID" value="NZ_CP064825.1"/>
</dbReference>
<dbReference type="GeneID" id="93777441"/>
<dbReference type="KEGG" id="eci:UTI89_C0001"/>
<dbReference type="HOGENOM" id="CLU_221491_0_1_6"/>
<dbReference type="Proteomes" id="UP000001952">
    <property type="component" value="Chromosome"/>
</dbReference>
<dbReference type="GO" id="GO:0009088">
    <property type="term" value="P:threonine biosynthetic process"/>
    <property type="evidence" value="ECO:0007669"/>
    <property type="project" value="UniProtKB-UniRule"/>
</dbReference>
<dbReference type="GO" id="GO:0031556">
    <property type="term" value="P:transcriptional attenuation by ribosome"/>
    <property type="evidence" value="ECO:0007669"/>
    <property type="project" value="UniProtKB-UniRule"/>
</dbReference>
<dbReference type="HAMAP" id="MF_01907">
    <property type="entry name" value="Leader_Thr"/>
    <property type="match status" value="1"/>
</dbReference>
<dbReference type="InterPro" id="IPR011720">
    <property type="entry name" value="Thr_lead_pept"/>
</dbReference>
<dbReference type="NCBIfam" id="NF007329">
    <property type="entry name" value="PRK09816.1"/>
    <property type="match status" value="1"/>
</dbReference>
<dbReference type="NCBIfam" id="TIGR02077">
    <property type="entry name" value="thr_lead_pep"/>
    <property type="match status" value="1"/>
</dbReference>
<dbReference type="Pfam" id="PF08254">
    <property type="entry name" value="Leader_Thr"/>
    <property type="match status" value="1"/>
</dbReference>
<evidence type="ECO:0000255" key="1">
    <source>
        <dbReference type="HAMAP-Rule" id="MF_01907"/>
    </source>
</evidence>
<organism>
    <name type="scientific">Escherichia coli (strain UTI89 / UPEC)</name>
    <dbReference type="NCBI Taxonomy" id="364106"/>
    <lineage>
        <taxon>Bacteria</taxon>
        <taxon>Pseudomonadati</taxon>
        <taxon>Pseudomonadota</taxon>
        <taxon>Gammaproteobacteria</taxon>
        <taxon>Enterobacterales</taxon>
        <taxon>Enterobacteriaceae</taxon>
        <taxon>Escherichia</taxon>
    </lineage>
</organism>
<feature type="peptide" id="PRO_0000312883" description="thr operon leader peptide">
    <location>
        <begin position="1"/>
        <end position="21"/>
    </location>
</feature>
<name>LPT_ECOUT</name>
<proteinExistence type="inferred from homology"/>